<reference key="1">
    <citation type="journal article" date="2001" name="Proc. Natl. Acad. Sci. U.S.A.">
        <title>Analysis of the chromosome sequence of the legume symbiont Sinorhizobium meliloti strain 1021.</title>
        <authorList>
            <person name="Capela D."/>
            <person name="Barloy-Hubler F."/>
            <person name="Gouzy J."/>
            <person name="Bothe G."/>
            <person name="Ampe F."/>
            <person name="Batut J."/>
            <person name="Boistard P."/>
            <person name="Becker A."/>
            <person name="Boutry M."/>
            <person name="Cadieu E."/>
            <person name="Dreano S."/>
            <person name="Gloux S."/>
            <person name="Godrie T."/>
            <person name="Goffeau A."/>
            <person name="Kahn D."/>
            <person name="Kiss E."/>
            <person name="Lelaure V."/>
            <person name="Masuy D."/>
            <person name="Pohl T."/>
            <person name="Portetelle D."/>
            <person name="Puehler A."/>
            <person name="Purnelle B."/>
            <person name="Ramsperger U."/>
            <person name="Renard C."/>
            <person name="Thebault P."/>
            <person name="Vandenbol M."/>
            <person name="Weidner S."/>
            <person name="Galibert F."/>
        </authorList>
    </citation>
    <scope>NUCLEOTIDE SEQUENCE [LARGE SCALE GENOMIC DNA]</scope>
    <source>
        <strain>1021</strain>
    </source>
</reference>
<reference key="2">
    <citation type="journal article" date="2001" name="Science">
        <title>The composite genome of the legume symbiont Sinorhizobium meliloti.</title>
        <authorList>
            <person name="Galibert F."/>
            <person name="Finan T.M."/>
            <person name="Long S.R."/>
            <person name="Puehler A."/>
            <person name="Abola P."/>
            <person name="Ampe F."/>
            <person name="Barloy-Hubler F."/>
            <person name="Barnett M.J."/>
            <person name="Becker A."/>
            <person name="Boistard P."/>
            <person name="Bothe G."/>
            <person name="Boutry M."/>
            <person name="Bowser L."/>
            <person name="Buhrmester J."/>
            <person name="Cadieu E."/>
            <person name="Capela D."/>
            <person name="Chain P."/>
            <person name="Cowie A."/>
            <person name="Davis R.W."/>
            <person name="Dreano S."/>
            <person name="Federspiel N.A."/>
            <person name="Fisher R.F."/>
            <person name="Gloux S."/>
            <person name="Godrie T."/>
            <person name="Goffeau A."/>
            <person name="Golding B."/>
            <person name="Gouzy J."/>
            <person name="Gurjal M."/>
            <person name="Hernandez-Lucas I."/>
            <person name="Hong A."/>
            <person name="Huizar L."/>
            <person name="Hyman R.W."/>
            <person name="Jones T."/>
            <person name="Kahn D."/>
            <person name="Kahn M.L."/>
            <person name="Kalman S."/>
            <person name="Keating D.H."/>
            <person name="Kiss E."/>
            <person name="Komp C."/>
            <person name="Lelaure V."/>
            <person name="Masuy D."/>
            <person name="Palm C."/>
            <person name="Peck M.C."/>
            <person name="Pohl T.M."/>
            <person name="Portetelle D."/>
            <person name="Purnelle B."/>
            <person name="Ramsperger U."/>
            <person name="Surzycki R."/>
            <person name="Thebault P."/>
            <person name="Vandenbol M."/>
            <person name="Vorhoelter F.J."/>
            <person name="Weidner S."/>
            <person name="Wells D.H."/>
            <person name="Wong K."/>
            <person name="Yeh K.-C."/>
            <person name="Batut J."/>
        </authorList>
    </citation>
    <scope>NUCLEOTIDE SEQUENCE [LARGE SCALE GENOMIC DNA]</scope>
    <source>
        <strain>1021</strain>
    </source>
</reference>
<accession>P58330</accession>
<sequence length="401" mass="42041">MTSILTNVAAMAALQTLRGIDSNMEETQARVSSGLRVGTASDNAAYWSIATTMRSDNMALSAVQDALGLGAAKVDTAYAGMENAVEVVKEIRAKLVAATEDGVDKAKIQEEIEQLKQQLTSIATAASFSGENWLQADITTPVTKSVVGSFVRDSSGVVSVKTIDYVLDGNSVLFDTVGDAGILDKIYNVSQASVTLPVNVNGTTTEYTVAAYAVDELIAAGATFDGDSANVTGYTVPAGGIDYNGNFVKVEGTWVRAIDVAATGQEVVYDDGTTKWGVDTTVAGAPAINVVAPASIENIDITNAAQAANLDALIRGVDEALEDLISATSALGSISMRIGMQEEFVSKLTDSIDSGIGRLVDADMNEESTRLKALQTQQQLAIQSLSIANTNSENILQLFRQ</sequence>
<evidence type="ECO:0000305" key="1"/>
<proteinExistence type="inferred from homology"/>
<comment type="function">
    <text>Flagellin is the subunit protein which polymerizes to form the filaments of bacterial flagella.</text>
</comment>
<comment type="subcellular location">
    <subcellularLocation>
        <location>Secreted</location>
    </subcellularLocation>
    <subcellularLocation>
        <location>Bacterial flagellum</location>
    </subcellularLocation>
</comment>
<comment type="similarity">
    <text evidence="1">Belongs to the bacterial flagellin family.</text>
</comment>
<protein>
    <recommendedName>
        <fullName>Flagellin D</fullName>
    </recommendedName>
</protein>
<keyword id="KW-0975">Bacterial flagellum</keyword>
<keyword id="KW-1185">Reference proteome</keyword>
<keyword id="KW-0964">Secreted</keyword>
<name>FLAD_RHIME</name>
<gene>
    <name type="primary">flaD</name>
    <name type="ordered locus">R00671</name>
    <name type="ORF">SMc03039</name>
</gene>
<feature type="chain" id="PRO_0000182626" description="Flagellin D">
    <location>
        <begin position="1"/>
        <end position="401"/>
    </location>
</feature>
<organism>
    <name type="scientific">Rhizobium meliloti (strain 1021)</name>
    <name type="common">Ensifer meliloti</name>
    <name type="synonym">Sinorhizobium meliloti</name>
    <dbReference type="NCBI Taxonomy" id="266834"/>
    <lineage>
        <taxon>Bacteria</taxon>
        <taxon>Pseudomonadati</taxon>
        <taxon>Pseudomonadota</taxon>
        <taxon>Alphaproteobacteria</taxon>
        <taxon>Hyphomicrobiales</taxon>
        <taxon>Rhizobiaceae</taxon>
        <taxon>Sinorhizobium/Ensifer group</taxon>
        <taxon>Sinorhizobium</taxon>
    </lineage>
</organism>
<dbReference type="EMBL" id="AL591688">
    <property type="protein sequence ID" value="CAC45243.1"/>
    <property type="molecule type" value="Genomic_DNA"/>
</dbReference>
<dbReference type="RefSeq" id="NP_384777.1">
    <property type="nucleotide sequence ID" value="NC_003047.1"/>
</dbReference>
<dbReference type="RefSeq" id="WP_010968738.1">
    <property type="nucleotide sequence ID" value="NC_003047.1"/>
</dbReference>
<dbReference type="SMR" id="P58330"/>
<dbReference type="EnsemblBacteria" id="CAC45243">
    <property type="protein sequence ID" value="CAC45243"/>
    <property type="gene ID" value="SMc03039"/>
</dbReference>
<dbReference type="KEGG" id="sme:SMc03039"/>
<dbReference type="PATRIC" id="fig|266834.11.peg.2045"/>
<dbReference type="eggNOG" id="COG1344">
    <property type="taxonomic scope" value="Bacteria"/>
</dbReference>
<dbReference type="HOGENOM" id="CLU_011142_1_0_5"/>
<dbReference type="OrthoDB" id="8328560at2"/>
<dbReference type="Proteomes" id="UP000001976">
    <property type="component" value="Chromosome"/>
</dbReference>
<dbReference type="GO" id="GO:0009288">
    <property type="term" value="C:bacterial-type flagellum"/>
    <property type="evidence" value="ECO:0007669"/>
    <property type="project" value="UniProtKB-SubCell"/>
</dbReference>
<dbReference type="GO" id="GO:0005576">
    <property type="term" value="C:extracellular region"/>
    <property type="evidence" value="ECO:0007669"/>
    <property type="project" value="UniProtKB-SubCell"/>
</dbReference>
<dbReference type="GO" id="GO:0005198">
    <property type="term" value="F:structural molecule activity"/>
    <property type="evidence" value="ECO:0007669"/>
    <property type="project" value="InterPro"/>
</dbReference>
<dbReference type="Gene3D" id="1.20.1330.10">
    <property type="entry name" value="f41 fragment of flagellin, N-terminal domain"/>
    <property type="match status" value="1"/>
</dbReference>
<dbReference type="InterPro" id="IPR001492">
    <property type="entry name" value="Flagellin"/>
</dbReference>
<dbReference type="InterPro" id="IPR046358">
    <property type="entry name" value="Flagellin_C"/>
</dbReference>
<dbReference type="InterPro" id="IPR001029">
    <property type="entry name" value="Flagellin_N"/>
</dbReference>
<dbReference type="PANTHER" id="PTHR42792">
    <property type="entry name" value="FLAGELLIN"/>
    <property type="match status" value="1"/>
</dbReference>
<dbReference type="PANTHER" id="PTHR42792:SF2">
    <property type="entry name" value="FLAGELLIN"/>
    <property type="match status" value="1"/>
</dbReference>
<dbReference type="Pfam" id="PF00700">
    <property type="entry name" value="Flagellin_C"/>
    <property type="match status" value="1"/>
</dbReference>
<dbReference type="Pfam" id="PF00669">
    <property type="entry name" value="Flagellin_N"/>
    <property type="match status" value="1"/>
</dbReference>
<dbReference type="PRINTS" id="PR00207">
    <property type="entry name" value="FLAGELLIN"/>
</dbReference>
<dbReference type="SUPFAM" id="SSF64518">
    <property type="entry name" value="Phase 1 flagellin"/>
    <property type="match status" value="1"/>
</dbReference>